<keyword id="KW-0067">ATP-binding</keyword>
<keyword id="KW-0963">Cytoplasm</keyword>
<keyword id="KW-0418">Kinase</keyword>
<keyword id="KW-0545">Nucleotide biosynthesis</keyword>
<keyword id="KW-0547">Nucleotide-binding</keyword>
<keyword id="KW-0808">Transferase</keyword>
<gene>
    <name evidence="1" type="primary">adk</name>
    <name type="ordered locus">Paes_1168</name>
</gene>
<proteinExistence type="inferred from homology"/>
<name>KAD_PROA2</name>
<reference key="1">
    <citation type="submission" date="2008-06" db="EMBL/GenBank/DDBJ databases">
        <title>Complete sequence of chromosome of Prosthecochloris aestuarii DSM 271.</title>
        <authorList>
            <consortium name="US DOE Joint Genome Institute"/>
            <person name="Lucas S."/>
            <person name="Copeland A."/>
            <person name="Lapidus A."/>
            <person name="Glavina del Rio T."/>
            <person name="Dalin E."/>
            <person name="Tice H."/>
            <person name="Bruce D."/>
            <person name="Goodwin L."/>
            <person name="Pitluck S."/>
            <person name="Schmutz J."/>
            <person name="Larimer F."/>
            <person name="Land M."/>
            <person name="Hauser L."/>
            <person name="Kyrpides N."/>
            <person name="Anderson I."/>
            <person name="Liu Z."/>
            <person name="Li T."/>
            <person name="Zhao F."/>
            <person name="Overmann J."/>
            <person name="Bryant D.A."/>
            <person name="Richardson P."/>
        </authorList>
    </citation>
    <scope>NUCLEOTIDE SEQUENCE [LARGE SCALE GENOMIC DNA]</scope>
    <source>
        <strain>DSM 271 / SK 413</strain>
    </source>
</reference>
<dbReference type="EC" id="2.7.4.3" evidence="1"/>
<dbReference type="EMBL" id="CP001108">
    <property type="protein sequence ID" value="ACF46197.1"/>
    <property type="molecule type" value="Genomic_DNA"/>
</dbReference>
<dbReference type="RefSeq" id="WP_012505732.1">
    <property type="nucleotide sequence ID" value="NC_011059.1"/>
</dbReference>
<dbReference type="SMR" id="B4S810"/>
<dbReference type="STRING" id="290512.Paes_1168"/>
<dbReference type="KEGG" id="paa:Paes_1168"/>
<dbReference type="eggNOG" id="COG0563">
    <property type="taxonomic scope" value="Bacteria"/>
</dbReference>
<dbReference type="HOGENOM" id="CLU_032354_1_2_10"/>
<dbReference type="UniPathway" id="UPA00588">
    <property type="reaction ID" value="UER00649"/>
</dbReference>
<dbReference type="Proteomes" id="UP000002725">
    <property type="component" value="Chromosome"/>
</dbReference>
<dbReference type="GO" id="GO:0005737">
    <property type="term" value="C:cytoplasm"/>
    <property type="evidence" value="ECO:0007669"/>
    <property type="project" value="UniProtKB-SubCell"/>
</dbReference>
<dbReference type="GO" id="GO:0004017">
    <property type="term" value="F:adenylate kinase activity"/>
    <property type="evidence" value="ECO:0007669"/>
    <property type="project" value="UniProtKB-UniRule"/>
</dbReference>
<dbReference type="GO" id="GO:0005524">
    <property type="term" value="F:ATP binding"/>
    <property type="evidence" value="ECO:0007669"/>
    <property type="project" value="UniProtKB-UniRule"/>
</dbReference>
<dbReference type="GO" id="GO:0044209">
    <property type="term" value="P:AMP salvage"/>
    <property type="evidence" value="ECO:0007669"/>
    <property type="project" value="UniProtKB-UniRule"/>
</dbReference>
<dbReference type="CDD" id="cd01428">
    <property type="entry name" value="ADK"/>
    <property type="match status" value="1"/>
</dbReference>
<dbReference type="FunFam" id="3.40.50.300:FF:000106">
    <property type="entry name" value="Adenylate kinase mitochondrial"/>
    <property type="match status" value="1"/>
</dbReference>
<dbReference type="Gene3D" id="3.40.50.300">
    <property type="entry name" value="P-loop containing nucleotide triphosphate hydrolases"/>
    <property type="match status" value="1"/>
</dbReference>
<dbReference type="HAMAP" id="MF_00235">
    <property type="entry name" value="Adenylate_kinase_Adk"/>
    <property type="match status" value="1"/>
</dbReference>
<dbReference type="InterPro" id="IPR006259">
    <property type="entry name" value="Adenyl_kin_sub"/>
</dbReference>
<dbReference type="InterPro" id="IPR000850">
    <property type="entry name" value="Adenylat/UMP-CMP_kin"/>
</dbReference>
<dbReference type="InterPro" id="IPR033690">
    <property type="entry name" value="Adenylat_kinase_CS"/>
</dbReference>
<dbReference type="InterPro" id="IPR007862">
    <property type="entry name" value="Adenylate_kinase_lid-dom"/>
</dbReference>
<dbReference type="InterPro" id="IPR027417">
    <property type="entry name" value="P-loop_NTPase"/>
</dbReference>
<dbReference type="NCBIfam" id="TIGR01351">
    <property type="entry name" value="adk"/>
    <property type="match status" value="1"/>
</dbReference>
<dbReference type="NCBIfam" id="NF001379">
    <property type="entry name" value="PRK00279.1-1"/>
    <property type="match status" value="1"/>
</dbReference>
<dbReference type="NCBIfam" id="NF001380">
    <property type="entry name" value="PRK00279.1-2"/>
    <property type="match status" value="1"/>
</dbReference>
<dbReference type="NCBIfam" id="NF001381">
    <property type="entry name" value="PRK00279.1-3"/>
    <property type="match status" value="1"/>
</dbReference>
<dbReference type="NCBIfam" id="NF011100">
    <property type="entry name" value="PRK14527.1"/>
    <property type="match status" value="1"/>
</dbReference>
<dbReference type="PANTHER" id="PTHR23359">
    <property type="entry name" value="NUCLEOTIDE KINASE"/>
    <property type="match status" value="1"/>
</dbReference>
<dbReference type="Pfam" id="PF00406">
    <property type="entry name" value="ADK"/>
    <property type="match status" value="1"/>
</dbReference>
<dbReference type="Pfam" id="PF05191">
    <property type="entry name" value="ADK_lid"/>
    <property type="match status" value="1"/>
</dbReference>
<dbReference type="PRINTS" id="PR00094">
    <property type="entry name" value="ADENYLTKNASE"/>
</dbReference>
<dbReference type="SUPFAM" id="SSF52540">
    <property type="entry name" value="P-loop containing nucleoside triphosphate hydrolases"/>
    <property type="match status" value="1"/>
</dbReference>
<dbReference type="PROSITE" id="PS00113">
    <property type="entry name" value="ADENYLATE_KINASE"/>
    <property type="match status" value="1"/>
</dbReference>
<organism>
    <name type="scientific">Prosthecochloris aestuarii (strain DSM 271 / SK 413)</name>
    <dbReference type="NCBI Taxonomy" id="290512"/>
    <lineage>
        <taxon>Bacteria</taxon>
        <taxon>Pseudomonadati</taxon>
        <taxon>Chlorobiota</taxon>
        <taxon>Chlorobiia</taxon>
        <taxon>Chlorobiales</taxon>
        <taxon>Chlorobiaceae</taxon>
        <taxon>Prosthecochloris</taxon>
    </lineage>
</organism>
<sequence length="218" mass="24571">MRIILLGAPGAGKGTQAQFISTAFNIPQISTGDMLRAAIQAQTPLGLEAKKVMDDGKLVSDEIILKLVKERINEPDCQQGCLFDGFPRTLAQAEALRQENITINHVIEIDVDNEEIIQRMSGRRVHLASGRTYHVIFNPPKKEGVDDITGEPLIQREDDTEETVRKRLEIYHNQTAPLIDYYREWEEKDLLQAPKFSSIKGSGSVEEIREKIFTELNA</sequence>
<evidence type="ECO:0000255" key="1">
    <source>
        <dbReference type="HAMAP-Rule" id="MF_00235"/>
    </source>
</evidence>
<comment type="function">
    <text evidence="1">Catalyzes the reversible transfer of the terminal phosphate group between ATP and AMP. Plays an important role in cellular energy homeostasis and in adenine nucleotide metabolism.</text>
</comment>
<comment type="catalytic activity">
    <reaction evidence="1">
        <text>AMP + ATP = 2 ADP</text>
        <dbReference type="Rhea" id="RHEA:12973"/>
        <dbReference type="ChEBI" id="CHEBI:30616"/>
        <dbReference type="ChEBI" id="CHEBI:456215"/>
        <dbReference type="ChEBI" id="CHEBI:456216"/>
        <dbReference type="EC" id="2.7.4.3"/>
    </reaction>
</comment>
<comment type="pathway">
    <text evidence="1">Purine metabolism; AMP biosynthesis via salvage pathway; AMP from ADP: step 1/1.</text>
</comment>
<comment type="subunit">
    <text evidence="1">Monomer.</text>
</comment>
<comment type="subcellular location">
    <subcellularLocation>
        <location evidence="1">Cytoplasm</location>
    </subcellularLocation>
</comment>
<comment type="domain">
    <text evidence="1">Consists of three domains, a large central CORE domain and two small peripheral domains, NMPbind and LID, which undergo movements during catalysis. The LID domain closes over the site of phosphoryl transfer upon ATP binding. Assembling and dissambling the active center during each catalytic cycle provides an effective means to prevent ATP hydrolysis.</text>
</comment>
<comment type="similarity">
    <text evidence="1">Belongs to the adenylate kinase family.</text>
</comment>
<protein>
    <recommendedName>
        <fullName evidence="1">Adenylate kinase</fullName>
        <shortName evidence="1">AK</shortName>
        <ecNumber evidence="1">2.7.4.3</ecNumber>
    </recommendedName>
    <alternativeName>
        <fullName evidence="1">ATP-AMP transphosphorylase</fullName>
    </alternativeName>
    <alternativeName>
        <fullName evidence="1">ATP:AMP phosphotransferase</fullName>
    </alternativeName>
    <alternativeName>
        <fullName evidence="1">Adenylate monophosphate kinase</fullName>
    </alternativeName>
</protein>
<feature type="chain" id="PRO_1000100593" description="Adenylate kinase">
    <location>
        <begin position="1"/>
        <end position="218"/>
    </location>
</feature>
<feature type="region of interest" description="NMP" evidence="1">
    <location>
        <begin position="30"/>
        <end position="59"/>
    </location>
</feature>
<feature type="region of interest" description="LID" evidence="1">
    <location>
        <begin position="122"/>
        <end position="159"/>
    </location>
</feature>
<feature type="binding site" evidence="1">
    <location>
        <begin position="10"/>
        <end position="15"/>
    </location>
    <ligand>
        <name>ATP</name>
        <dbReference type="ChEBI" id="CHEBI:30616"/>
    </ligand>
</feature>
<feature type="binding site" evidence="1">
    <location>
        <position position="31"/>
    </location>
    <ligand>
        <name>AMP</name>
        <dbReference type="ChEBI" id="CHEBI:456215"/>
    </ligand>
</feature>
<feature type="binding site" evidence="1">
    <location>
        <position position="36"/>
    </location>
    <ligand>
        <name>AMP</name>
        <dbReference type="ChEBI" id="CHEBI:456215"/>
    </ligand>
</feature>
<feature type="binding site" evidence="1">
    <location>
        <begin position="57"/>
        <end position="59"/>
    </location>
    <ligand>
        <name>AMP</name>
        <dbReference type="ChEBI" id="CHEBI:456215"/>
    </ligand>
</feature>
<feature type="binding site" evidence="1">
    <location>
        <begin position="85"/>
        <end position="88"/>
    </location>
    <ligand>
        <name>AMP</name>
        <dbReference type="ChEBI" id="CHEBI:456215"/>
    </ligand>
</feature>
<feature type="binding site" evidence="1">
    <location>
        <position position="92"/>
    </location>
    <ligand>
        <name>AMP</name>
        <dbReference type="ChEBI" id="CHEBI:456215"/>
    </ligand>
</feature>
<feature type="binding site" evidence="1">
    <location>
        <position position="123"/>
    </location>
    <ligand>
        <name>ATP</name>
        <dbReference type="ChEBI" id="CHEBI:30616"/>
    </ligand>
</feature>
<feature type="binding site" evidence="1">
    <location>
        <begin position="132"/>
        <end position="133"/>
    </location>
    <ligand>
        <name>ATP</name>
        <dbReference type="ChEBI" id="CHEBI:30616"/>
    </ligand>
</feature>
<feature type="binding site" evidence="1">
    <location>
        <position position="156"/>
    </location>
    <ligand>
        <name>AMP</name>
        <dbReference type="ChEBI" id="CHEBI:456215"/>
    </ligand>
</feature>
<feature type="binding site" evidence="1">
    <location>
        <position position="167"/>
    </location>
    <ligand>
        <name>AMP</name>
        <dbReference type="ChEBI" id="CHEBI:456215"/>
    </ligand>
</feature>
<feature type="binding site" evidence="1">
    <location>
        <position position="203"/>
    </location>
    <ligand>
        <name>ATP</name>
        <dbReference type="ChEBI" id="CHEBI:30616"/>
    </ligand>
</feature>
<accession>B4S810</accession>